<geneLocation type="plasmid">
    <name>IncI1 ColIb-P9</name>
</geneLocation>
<name>YPCB_ECOLX</name>
<evidence type="ECO:0000305" key="1"/>
<sequence length="216" mass="24546">IQNDTGLPEESICSFRFLWRSTSVDDAVQIHWANGNIQVIRPVRGISINGEAQGGIRPPYWVILAFCRSADGRIICSEGYAHALYQLTCPVPVDSKLERNTLTALLNVASWLKRKPGTPELSLERPLFDTEVYVNGEKKYVLPDFIVTARAPDGKTARVVIETMGYEDSDYCARKSRQHTGMKQIGELHTDPPKWLDNDHPPFKKHMYGVFMHLRY</sequence>
<reference key="1">
    <citation type="journal article" date="1984" name="Nucleic Acids Res.">
        <title>Analysis of a cloned colicin Ib gene: complete nucleotide sequence and implications for regulation of expression.</title>
        <authorList>
            <person name="Varley J.M."/>
            <person name="Boulnois G.J."/>
        </authorList>
    </citation>
    <scope>NUCLEOTIDE SEQUENCE [GENOMIC DNA]</scope>
</reference>
<proteinExistence type="inferred from homology"/>
<accession>P04481</accession>
<keyword id="KW-0044">Antibiotic</keyword>
<keyword id="KW-0929">Antimicrobial</keyword>
<keyword id="KW-0078">Bacteriocin</keyword>
<keyword id="KW-0614">Plasmid</keyword>
<comment type="similarity">
    <text evidence="1">Belongs to the channel forming colicin family.</text>
</comment>
<feature type="chain" id="PRO_0000218670" description="Uncharacterized protein in cib 5'region">
    <location>
        <begin position="1" status="less than"/>
        <end position="216"/>
    </location>
</feature>
<feature type="non-terminal residue">
    <location>
        <position position="1"/>
    </location>
</feature>
<dbReference type="EMBL" id="X01009">
    <property type="protein sequence ID" value="CAA25504.1"/>
    <property type="molecule type" value="Genomic_DNA"/>
</dbReference>
<dbReference type="PIR" id="A03505">
    <property type="entry name" value="A03505"/>
</dbReference>
<dbReference type="GO" id="GO:0042742">
    <property type="term" value="P:defense response to bacterium"/>
    <property type="evidence" value="ECO:0007669"/>
    <property type="project" value="UniProtKB-KW"/>
</dbReference>
<dbReference type="GO" id="GO:0031640">
    <property type="term" value="P:killing of cells of another organism"/>
    <property type="evidence" value="ECO:0007669"/>
    <property type="project" value="UniProtKB-KW"/>
</dbReference>
<organism>
    <name type="scientific">Escherichia coli</name>
    <dbReference type="NCBI Taxonomy" id="562"/>
    <lineage>
        <taxon>Bacteria</taxon>
        <taxon>Pseudomonadati</taxon>
        <taxon>Pseudomonadota</taxon>
        <taxon>Gammaproteobacteria</taxon>
        <taxon>Enterobacterales</taxon>
        <taxon>Enterobacteriaceae</taxon>
        <taxon>Escherichia</taxon>
    </lineage>
</organism>
<protein>
    <recommendedName>
        <fullName>Uncharacterized protein in cib 5'region</fullName>
    </recommendedName>
</protein>